<name>ATPB_NYPFR</name>
<dbReference type="EC" id="7.1.2.2" evidence="1"/>
<dbReference type="EMBL" id="AY012414">
    <property type="protein sequence ID" value="AAK14669.1"/>
    <property type="molecule type" value="Genomic_DNA"/>
</dbReference>
<dbReference type="SMR" id="Q9BA85"/>
<dbReference type="GO" id="GO:0009535">
    <property type="term" value="C:chloroplast thylakoid membrane"/>
    <property type="evidence" value="ECO:0007669"/>
    <property type="project" value="UniProtKB-SubCell"/>
</dbReference>
<dbReference type="GO" id="GO:0005739">
    <property type="term" value="C:mitochondrion"/>
    <property type="evidence" value="ECO:0007669"/>
    <property type="project" value="GOC"/>
</dbReference>
<dbReference type="GO" id="GO:0045259">
    <property type="term" value="C:proton-transporting ATP synthase complex"/>
    <property type="evidence" value="ECO:0007669"/>
    <property type="project" value="UniProtKB-KW"/>
</dbReference>
<dbReference type="GO" id="GO:0005524">
    <property type="term" value="F:ATP binding"/>
    <property type="evidence" value="ECO:0007669"/>
    <property type="project" value="UniProtKB-UniRule"/>
</dbReference>
<dbReference type="GO" id="GO:0016887">
    <property type="term" value="F:ATP hydrolysis activity"/>
    <property type="evidence" value="ECO:0007669"/>
    <property type="project" value="InterPro"/>
</dbReference>
<dbReference type="GO" id="GO:0046933">
    <property type="term" value="F:proton-transporting ATP synthase activity, rotational mechanism"/>
    <property type="evidence" value="ECO:0007669"/>
    <property type="project" value="UniProtKB-UniRule"/>
</dbReference>
<dbReference type="GO" id="GO:0042776">
    <property type="term" value="P:proton motive force-driven mitochondrial ATP synthesis"/>
    <property type="evidence" value="ECO:0007669"/>
    <property type="project" value="TreeGrafter"/>
</dbReference>
<dbReference type="CDD" id="cd18110">
    <property type="entry name" value="ATP-synt_F1_beta_C"/>
    <property type="match status" value="1"/>
</dbReference>
<dbReference type="CDD" id="cd18115">
    <property type="entry name" value="ATP-synt_F1_beta_N"/>
    <property type="match status" value="1"/>
</dbReference>
<dbReference type="CDD" id="cd01133">
    <property type="entry name" value="F1-ATPase_beta_CD"/>
    <property type="match status" value="1"/>
</dbReference>
<dbReference type="FunFam" id="1.10.1140.10:FF:000001">
    <property type="entry name" value="ATP synthase subunit beta"/>
    <property type="match status" value="1"/>
</dbReference>
<dbReference type="FunFam" id="3.40.50.12240:FF:000006">
    <property type="entry name" value="ATP synthase subunit beta"/>
    <property type="match status" value="1"/>
</dbReference>
<dbReference type="FunFam" id="3.40.50.300:FF:000004">
    <property type="entry name" value="ATP synthase subunit beta"/>
    <property type="match status" value="1"/>
</dbReference>
<dbReference type="FunFam" id="2.40.10.170:FF:000002">
    <property type="entry name" value="ATP synthase subunit beta, chloroplastic"/>
    <property type="match status" value="1"/>
</dbReference>
<dbReference type="Gene3D" id="2.40.10.170">
    <property type="match status" value="1"/>
</dbReference>
<dbReference type="Gene3D" id="1.10.1140.10">
    <property type="entry name" value="Bovine Mitochondrial F1-atpase, Atp Synthase Beta Chain, Chain D, domain 3"/>
    <property type="match status" value="1"/>
</dbReference>
<dbReference type="Gene3D" id="3.40.50.300">
    <property type="entry name" value="P-loop containing nucleotide triphosphate hydrolases"/>
    <property type="match status" value="1"/>
</dbReference>
<dbReference type="HAMAP" id="MF_01347">
    <property type="entry name" value="ATP_synth_beta_bact"/>
    <property type="match status" value="1"/>
</dbReference>
<dbReference type="InterPro" id="IPR003593">
    <property type="entry name" value="AAA+_ATPase"/>
</dbReference>
<dbReference type="InterPro" id="IPR055190">
    <property type="entry name" value="ATP-synt_VA_C"/>
</dbReference>
<dbReference type="InterPro" id="IPR005722">
    <property type="entry name" value="ATP_synth_F1_bsu"/>
</dbReference>
<dbReference type="InterPro" id="IPR020003">
    <property type="entry name" value="ATPase_a/bsu_AS"/>
</dbReference>
<dbReference type="InterPro" id="IPR050053">
    <property type="entry name" value="ATPase_alpha/beta_chains"/>
</dbReference>
<dbReference type="InterPro" id="IPR004100">
    <property type="entry name" value="ATPase_F1/V1/A1_a/bsu_N"/>
</dbReference>
<dbReference type="InterPro" id="IPR036121">
    <property type="entry name" value="ATPase_F1/V1/A1_a/bsu_N_sf"/>
</dbReference>
<dbReference type="InterPro" id="IPR000194">
    <property type="entry name" value="ATPase_F1/V1/A1_a/bsu_nucl-bd"/>
</dbReference>
<dbReference type="InterPro" id="IPR024034">
    <property type="entry name" value="ATPase_F1/V1_b/a_C"/>
</dbReference>
<dbReference type="InterPro" id="IPR027417">
    <property type="entry name" value="P-loop_NTPase"/>
</dbReference>
<dbReference type="NCBIfam" id="TIGR01039">
    <property type="entry name" value="atpD"/>
    <property type="match status" value="1"/>
</dbReference>
<dbReference type="PANTHER" id="PTHR15184">
    <property type="entry name" value="ATP SYNTHASE"/>
    <property type="match status" value="1"/>
</dbReference>
<dbReference type="PANTHER" id="PTHR15184:SF71">
    <property type="entry name" value="ATP SYNTHASE SUBUNIT BETA, MITOCHONDRIAL"/>
    <property type="match status" value="1"/>
</dbReference>
<dbReference type="Pfam" id="PF00006">
    <property type="entry name" value="ATP-synt_ab"/>
    <property type="match status" value="1"/>
</dbReference>
<dbReference type="Pfam" id="PF02874">
    <property type="entry name" value="ATP-synt_ab_N"/>
    <property type="match status" value="1"/>
</dbReference>
<dbReference type="Pfam" id="PF22919">
    <property type="entry name" value="ATP-synt_VA_C"/>
    <property type="match status" value="1"/>
</dbReference>
<dbReference type="SMART" id="SM00382">
    <property type="entry name" value="AAA"/>
    <property type="match status" value="1"/>
</dbReference>
<dbReference type="SUPFAM" id="SSF47917">
    <property type="entry name" value="C-terminal domain of alpha and beta subunits of F1 ATP synthase"/>
    <property type="match status" value="1"/>
</dbReference>
<dbReference type="SUPFAM" id="SSF50615">
    <property type="entry name" value="N-terminal domain of alpha and beta subunits of F1 ATP synthase"/>
    <property type="match status" value="1"/>
</dbReference>
<dbReference type="SUPFAM" id="SSF52540">
    <property type="entry name" value="P-loop containing nucleoside triphosphate hydrolases"/>
    <property type="match status" value="1"/>
</dbReference>
<dbReference type="PROSITE" id="PS00152">
    <property type="entry name" value="ATPASE_ALPHA_BETA"/>
    <property type="match status" value="1"/>
</dbReference>
<comment type="function">
    <text evidence="1">Produces ATP from ADP in the presence of a proton gradient across the membrane. The catalytic sites are hosted primarily by the beta subunits.</text>
</comment>
<comment type="catalytic activity">
    <reaction evidence="1">
        <text>ATP + H2O + 4 H(+)(in) = ADP + phosphate + 5 H(+)(out)</text>
        <dbReference type="Rhea" id="RHEA:57720"/>
        <dbReference type="ChEBI" id="CHEBI:15377"/>
        <dbReference type="ChEBI" id="CHEBI:15378"/>
        <dbReference type="ChEBI" id="CHEBI:30616"/>
        <dbReference type="ChEBI" id="CHEBI:43474"/>
        <dbReference type="ChEBI" id="CHEBI:456216"/>
        <dbReference type="EC" id="7.1.2.2"/>
    </reaction>
</comment>
<comment type="subunit">
    <text evidence="1">F-type ATPases have 2 components, CF(1) - the catalytic core - and CF(0) - the membrane proton channel. CF(1) has five subunits: alpha(3), beta(3), gamma(1), delta(1), epsilon(1). CF(0) has four main subunits: a(1), b(1), b'(1) and c(9-12).</text>
</comment>
<comment type="subcellular location">
    <subcellularLocation>
        <location evidence="1">Plastid</location>
        <location evidence="1">Chloroplast thylakoid membrane</location>
        <topology evidence="1">Peripheral membrane protein</topology>
    </subcellularLocation>
</comment>
<comment type="similarity">
    <text evidence="1">Belongs to the ATPase alpha/beta chains family.</text>
</comment>
<proteinExistence type="inferred from homology"/>
<accession>Q9BA85</accession>
<evidence type="ECO:0000255" key="1">
    <source>
        <dbReference type="HAMAP-Rule" id="MF_01347"/>
    </source>
</evidence>
<protein>
    <recommendedName>
        <fullName evidence="1">ATP synthase subunit beta, chloroplastic</fullName>
        <ecNumber evidence="1">7.1.2.2</ecNumber>
    </recommendedName>
    <alternativeName>
        <fullName evidence="1">ATP synthase F1 sector subunit beta</fullName>
    </alternativeName>
    <alternativeName>
        <fullName evidence="1">F-ATPase subunit beta</fullName>
    </alternativeName>
</protein>
<sequence length="498" mass="53792">MRTNPTTSSPVVSTLEEKNLGRIAQIIGPVLDVVFPPGKMPNIYNALAVKGRDTVGQQINVTCEVQQLLGNNRVRAVAMSATDGLMRGMEVIDTGAPLSVPVGGATLGRIFNVLGEPVDNLGPVDTRTTSPIHRSAPAFIQLDTKFSIFETGIKVVDLLAPYRRGGKIGLFGGAGVGKTVLIMELINNIAKAHGGVSVFGGVGERTREGNDLYMEMKESGVINEKNIAESKVALVYGQMNEPPGARMRVGLTALTMAEYFRDVNEQDVLLFIDNIFRFVQAGSEVSALLGRMPSAVGYQPTLSTEMGSLQERITSTKEGSITSIQAVYVPADDLTDPAPATTFAHLDATTVLSRVLAAKGIYPAVDPLDSTSTMLQPRIVGEEHYETAQRVKQTSQRYKELQDIIAILGLDELSEEDRLTVARARKIERFLSQPFFVAEVFTGSPGKYVGLAETIRGFQLILSGELDGLPEQAFYLVGNIDEATAKAMNLEVESKLKK</sequence>
<gene>
    <name evidence="1" type="primary">atpB</name>
</gene>
<keyword id="KW-0066">ATP synthesis</keyword>
<keyword id="KW-0067">ATP-binding</keyword>
<keyword id="KW-0139">CF(1)</keyword>
<keyword id="KW-0150">Chloroplast</keyword>
<keyword id="KW-0375">Hydrogen ion transport</keyword>
<keyword id="KW-0406">Ion transport</keyword>
<keyword id="KW-0472">Membrane</keyword>
<keyword id="KW-0547">Nucleotide-binding</keyword>
<keyword id="KW-0934">Plastid</keyword>
<keyword id="KW-0793">Thylakoid</keyword>
<keyword id="KW-1278">Translocase</keyword>
<keyword id="KW-0813">Transport</keyword>
<reference key="1">
    <citation type="journal article" date="2002" name="Syst. Biol.">
        <title>A molecular phylogenetic study of the Palmae (Arecaceae) based on atpB, rbcL, and 18S nrDNA sequences.</title>
        <authorList>
            <person name="Hahn W.J."/>
        </authorList>
    </citation>
    <scope>NUCLEOTIDE SEQUENCE [GENOMIC DNA]</scope>
</reference>
<organism>
    <name type="scientific">Nypa fruticans</name>
    <name type="common">Nypa palm</name>
    <dbReference type="NCBI Taxonomy" id="4718"/>
    <lineage>
        <taxon>Eukaryota</taxon>
        <taxon>Viridiplantae</taxon>
        <taxon>Streptophyta</taxon>
        <taxon>Embryophyta</taxon>
        <taxon>Tracheophyta</taxon>
        <taxon>Spermatophyta</taxon>
        <taxon>Magnoliopsida</taxon>
        <taxon>Liliopsida</taxon>
        <taxon>Arecaceae</taxon>
        <taxon>Nypoideae</taxon>
        <taxon>Nypa</taxon>
    </lineage>
</organism>
<geneLocation type="chloroplast"/>
<feature type="chain" id="PRO_0000254502" description="ATP synthase subunit beta, chloroplastic">
    <location>
        <begin position="1"/>
        <end position="498"/>
    </location>
</feature>
<feature type="binding site" evidence="1">
    <location>
        <begin position="172"/>
        <end position="179"/>
    </location>
    <ligand>
        <name>ATP</name>
        <dbReference type="ChEBI" id="CHEBI:30616"/>
    </ligand>
</feature>